<keyword id="KW-0106">Calcium</keyword>
<keyword id="KW-0479">Metal-binding</keyword>
<keyword id="KW-1185">Reference proteome</keyword>
<keyword id="KW-0677">Repeat</keyword>
<accession>P48451</accession>
<accession>Q9W4D0</accession>
<evidence type="ECO:0000250" key="1"/>
<evidence type="ECO:0000255" key="2">
    <source>
        <dbReference type="PROSITE-ProRule" id="PRU00448"/>
    </source>
</evidence>
<evidence type="ECO:0000305" key="3"/>
<comment type="function">
    <text evidence="1">Calcineurin is a calcium-binding and calmodulin-binding protein found in all cells from yeast to mammals, and a calcium-dependent, calmodulin-stimulated protein phosphatase.</text>
</comment>
<comment type="subunit">
    <text evidence="1">Composed of two components (A and B), the A component is the catalytic subunit and the B component confers calcium sensitivity.</text>
</comment>
<comment type="miscellaneous">
    <text>This protein has four functional calcium-binding sites.</text>
</comment>
<comment type="similarity">
    <text evidence="3">Belongs to the calcineurin regulatory subunit family.</text>
</comment>
<organism>
    <name type="scientific">Drosophila melanogaster</name>
    <name type="common">Fruit fly</name>
    <dbReference type="NCBI Taxonomy" id="7227"/>
    <lineage>
        <taxon>Eukaryota</taxon>
        <taxon>Metazoa</taxon>
        <taxon>Ecdysozoa</taxon>
        <taxon>Arthropoda</taxon>
        <taxon>Hexapoda</taxon>
        <taxon>Insecta</taxon>
        <taxon>Pterygota</taxon>
        <taxon>Neoptera</taxon>
        <taxon>Endopterygota</taxon>
        <taxon>Diptera</taxon>
        <taxon>Brachycera</taxon>
        <taxon>Muscomorpha</taxon>
        <taxon>Ephydroidea</taxon>
        <taxon>Drosophilidae</taxon>
        <taxon>Drosophila</taxon>
        <taxon>Sophophora</taxon>
    </lineage>
</organism>
<reference key="1">
    <citation type="journal article" date="1992" name="J. Biol. Chem.">
        <title>Molecular cloning and characterization of the genes encoding the two subunits of Drosophila melanogaster calcineurin.</title>
        <authorList>
            <person name="Guerini D."/>
            <person name="Montell C."/>
            <person name="Klee C.B."/>
        </authorList>
    </citation>
    <scope>NUCLEOTIDE SEQUENCE [MRNA]</scope>
    <source>
        <tissue>Embryo</tissue>
    </source>
</reference>
<reference key="2">
    <citation type="journal article" date="2000" name="Science">
        <title>The genome sequence of Drosophila melanogaster.</title>
        <authorList>
            <person name="Adams M.D."/>
            <person name="Celniker S.E."/>
            <person name="Holt R.A."/>
            <person name="Evans C.A."/>
            <person name="Gocayne J.D."/>
            <person name="Amanatides P.G."/>
            <person name="Scherer S.E."/>
            <person name="Li P.W."/>
            <person name="Hoskins R.A."/>
            <person name="Galle R.F."/>
            <person name="George R.A."/>
            <person name="Lewis S.E."/>
            <person name="Richards S."/>
            <person name="Ashburner M."/>
            <person name="Henderson S.N."/>
            <person name="Sutton G.G."/>
            <person name="Wortman J.R."/>
            <person name="Yandell M.D."/>
            <person name="Zhang Q."/>
            <person name="Chen L.X."/>
            <person name="Brandon R.C."/>
            <person name="Rogers Y.-H.C."/>
            <person name="Blazej R.G."/>
            <person name="Champe M."/>
            <person name="Pfeiffer B.D."/>
            <person name="Wan K.H."/>
            <person name="Doyle C."/>
            <person name="Baxter E.G."/>
            <person name="Helt G."/>
            <person name="Nelson C.R."/>
            <person name="Miklos G.L.G."/>
            <person name="Abril J.F."/>
            <person name="Agbayani A."/>
            <person name="An H.-J."/>
            <person name="Andrews-Pfannkoch C."/>
            <person name="Baldwin D."/>
            <person name="Ballew R.M."/>
            <person name="Basu A."/>
            <person name="Baxendale J."/>
            <person name="Bayraktaroglu L."/>
            <person name="Beasley E.M."/>
            <person name="Beeson K.Y."/>
            <person name="Benos P.V."/>
            <person name="Berman B.P."/>
            <person name="Bhandari D."/>
            <person name="Bolshakov S."/>
            <person name="Borkova D."/>
            <person name="Botchan M.R."/>
            <person name="Bouck J."/>
            <person name="Brokstein P."/>
            <person name="Brottier P."/>
            <person name="Burtis K.C."/>
            <person name="Busam D.A."/>
            <person name="Butler H."/>
            <person name="Cadieu E."/>
            <person name="Center A."/>
            <person name="Chandra I."/>
            <person name="Cherry J.M."/>
            <person name="Cawley S."/>
            <person name="Dahlke C."/>
            <person name="Davenport L.B."/>
            <person name="Davies P."/>
            <person name="de Pablos B."/>
            <person name="Delcher A."/>
            <person name="Deng Z."/>
            <person name="Mays A.D."/>
            <person name="Dew I."/>
            <person name="Dietz S.M."/>
            <person name="Dodson K."/>
            <person name="Doup L.E."/>
            <person name="Downes M."/>
            <person name="Dugan-Rocha S."/>
            <person name="Dunkov B.C."/>
            <person name="Dunn P."/>
            <person name="Durbin K.J."/>
            <person name="Evangelista C.C."/>
            <person name="Ferraz C."/>
            <person name="Ferriera S."/>
            <person name="Fleischmann W."/>
            <person name="Fosler C."/>
            <person name="Gabrielian A.E."/>
            <person name="Garg N.S."/>
            <person name="Gelbart W.M."/>
            <person name="Glasser K."/>
            <person name="Glodek A."/>
            <person name="Gong F."/>
            <person name="Gorrell J.H."/>
            <person name="Gu Z."/>
            <person name="Guan P."/>
            <person name="Harris M."/>
            <person name="Harris N.L."/>
            <person name="Harvey D.A."/>
            <person name="Heiman T.J."/>
            <person name="Hernandez J.R."/>
            <person name="Houck J."/>
            <person name="Hostin D."/>
            <person name="Houston K.A."/>
            <person name="Howland T.J."/>
            <person name="Wei M.-H."/>
            <person name="Ibegwam C."/>
            <person name="Jalali M."/>
            <person name="Kalush F."/>
            <person name="Karpen G.H."/>
            <person name="Ke Z."/>
            <person name="Kennison J.A."/>
            <person name="Ketchum K.A."/>
            <person name="Kimmel B.E."/>
            <person name="Kodira C.D."/>
            <person name="Kraft C.L."/>
            <person name="Kravitz S."/>
            <person name="Kulp D."/>
            <person name="Lai Z."/>
            <person name="Lasko P."/>
            <person name="Lei Y."/>
            <person name="Levitsky A.A."/>
            <person name="Li J.H."/>
            <person name="Li Z."/>
            <person name="Liang Y."/>
            <person name="Lin X."/>
            <person name="Liu X."/>
            <person name="Mattei B."/>
            <person name="McIntosh T.C."/>
            <person name="McLeod M.P."/>
            <person name="McPherson D."/>
            <person name="Merkulov G."/>
            <person name="Milshina N.V."/>
            <person name="Mobarry C."/>
            <person name="Morris J."/>
            <person name="Moshrefi A."/>
            <person name="Mount S.M."/>
            <person name="Moy M."/>
            <person name="Murphy B."/>
            <person name="Murphy L."/>
            <person name="Muzny D.M."/>
            <person name="Nelson D.L."/>
            <person name="Nelson D.R."/>
            <person name="Nelson K.A."/>
            <person name="Nixon K."/>
            <person name="Nusskern D.R."/>
            <person name="Pacleb J.M."/>
            <person name="Palazzolo M."/>
            <person name="Pittman G.S."/>
            <person name="Pan S."/>
            <person name="Pollard J."/>
            <person name="Puri V."/>
            <person name="Reese M.G."/>
            <person name="Reinert K."/>
            <person name="Remington K."/>
            <person name="Saunders R.D.C."/>
            <person name="Scheeler F."/>
            <person name="Shen H."/>
            <person name="Shue B.C."/>
            <person name="Siden-Kiamos I."/>
            <person name="Simpson M."/>
            <person name="Skupski M.P."/>
            <person name="Smith T.J."/>
            <person name="Spier E."/>
            <person name="Spradling A.C."/>
            <person name="Stapleton M."/>
            <person name="Strong R."/>
            <person name="Sun E."/>
            <person name="Svirskas R."/>
            <person name="Tector C."/>
            <person name="Turner R."/>
            <person name="Venter E."/>
            <person name="Wang A.H."/>
            <person name="Wang X."/>
            <person name="Wang Z.-Y."/>
            <person name="Wassarman D.A."/>
            <person name="Weinstock G.M."/>
            <person name="Weissenbach J."/>
            <person name="Williams S.M."/>
            <person name="Woodage T."/>
            <person name="Worley K.C."/>
            <person name="Wu D."/>
            <person name="Yang S."/>
            <person name="Yao Q.A."/>
            <person name="Ye J."/>
            <person name="Yeh R.-F."/>
            <person name="Zaveri J.S."/>
            <person name="Zhan M."/>
            <person name="Zhang G."/>
            <person name="Zhao Q."/>
            <person name="Zheng L."/>
            <person name="Zheng X.H."/>
            <person name="Zhong F.N."/>
            <person name="Zhong W."/>
            <person name="Zhou X."/>
            <person name="Zhu S.C."/>
            <person name="Zhu X."/>
            <person name="Smith H.O."/>
            <person name="Gibbs R.A."/>
            <person name="Myers E.W."/>
            <person name="Rubin G.M."/>
            <person name="Venter J.C."/>
        </authorList>
    </citation>
    <scope>NUCLEOTIDE SEQUENCE [LARGE SCALE GENOMIC DNA]</scope>
    <source>
        <strain>Berkeley</strain>
    </source>
</reference>
<reference key="3">
    <citation type="journal article" date="2002" name="Genome Biol.">
        <title>Annotation of the Drosophila melanogaster euchromatic genome: a systematic review.</title>
        <authorList>
            <person name="Misra S."/>
            <person name="Crosby M.A."/>
            <person name="Mungall C.J."/>
            <person name="Matthews B.B."/>
            <person name="Campbell K.S."/>
            <person name="Hradecky P."/>
            <person name="Huang Y."/>
            <person name="Kaminker J.S."/>
            <person name="Millburn G.H."/>
            <person name="Prochnik S.E."/>
            <person name="Smith C.D."/>
            <person name="Tupy J.L."/>
            <person name="Whitfield E.J."/>
            <person name="Bayraktaroglu L."/>
            <person name="Berman B.P."/>
            <person name="Bettencourt B.R."/>
            <person name="Celniker S.E."/>
            <person name="de Grey A.D.N.J."/>
            <person name="Drysdale R.A."/>
            <person name="Harris N.L."/>
            <person name="Richter J."/>
            <person name="Russo S."/>
            <person name="Schroeder A.J."/>
            <person name="Shu S.Q."/>
            <person name="Stapleton M."/>
            <person name="Yamada C."/>
            <person name="Ashburner M."/>
            <person name="Gelbart W.M."/>
            <person name="Rubin G.M."/>
            <person name="Lewis S.E."/>
        </authorList>
    </citation>
    <scope>GENOME REANNOTATION</scope>
    <source>
        <strain>Berkeley</strain>
    </source>
</reference>
<reference key="4">
    <citation type="journal article" date="2002" name="Genome Biol.">
        <title>A Drosophila full-length cDNA resource.</title>
        <authorList>
            <person name="Stapleton M."/>
            <person name="Carlson J.W."/>
            <person name="Brokstein P."/>
            <person name="Yu C."/>
            <person name="Champe M."/>
            <person name="George R.A."/>
            <person name="Guarin H."/>
            <person name="Kronmiller B."/>
            <person name="Pacleb J.M."/>
            <person name="Park S."/>
            <person name="Wan K.H."/>
            <person name="Rubin G.M."/>
            <person name="Celniker S.E."/>
        </authorList>
    </citation>
    <scope>NUCLEOTIDE SEQUENCE [LARGE SCALE MRNA]</scope>
    <source>
        <strain>Berkeley</strain>
        <tissue>Head</tissue>
    </source>
</reference>
<sequence>MGNETSLPMDMCSNFDADEIRRLGKRFRKLDLDNSGALSIDEFMSLPELQQNPLVQRVIDIFDADGNGEVDFKEFIQGVSQFSVRGDKLSKLRFAFRIYDMDNDGYISNGELFQVLKMMVGNNLKDTQLQQIVDKTICFADKDEDGKISFDEFCSVVGNTDIHKKMVVDV</sequence>
<protein>
    <recommendedName>
        <fullName>Calcineurin subunit B type 1</fullName>
    </recommendedName>
    <alternativeName>
        <fullName>Protein phosphatase 2B regulatory subunit 1</fullName>
    </alternativeName>
</protein>
<name>CANB1_DROME</name>
<dbReference type="EMBL" id="M97215">
    <property type="protein sequence ID" value="AAA28411.1"/>
    <property type="molecule type" value="mRNA"/>
</dbReference>
<dbReference type="EMBL" id="AE014298">
    <property type="protein sequence ID" value="AAF46026.1"/>
    <property type="molecule type" value="Genomic_DNA"/>
</dbReference>
<dbReference type="EMBL" id="AY070642">
    <property type="protein sequence ID" value="AAL48113.1"/>
    <property type="molecule type" value="mRNA"/>
</dbReference>
<dbReference type="PIR" id="A44307">
    <property type="entry name" value="A44307"/>
</dbReference>
<dbReference type="RefSeq" id="NP_001245531.1">
    <property type="nucleotide sequence ID" value="NM_001258602.1"/>
</dbReference>
<dbReference type="RefSeq" id="NP_524741.1">
    <property type="nucleotide sequence ID" value="NM_080002.4"/>
</dbReference>
<dbReference type="SMR" id="P48451"/>
<dbReference type="BioGRID" id="68974">
    <property type="interactions" value="10"/>
</dbReference>
<dbReference type="DIP" id="DIP-19306N"/>
<dbReference type="FunCoup" id="P48451">
    <property type="interactions" value="1641"/>
</dbReference>
<dbReference type="IntAct" id="P48451">
    <property type="interactions" value="5"/>
</dbReference>
<dbReference type="STRING" id="7227.FBpp0070731"/>
<dbReference type="PaxDb" id="7227-FBpp0300667"/>
<dbReference type="DNASU" id="44317"/>
<dbReference type="EnsemblMetazoa" id="FBtr0070764">
    <property type="protein sequence ID" value="FBpp0070731"/>
    <property type="gene ID" value="FBgn0010014"/>
</dbReference>
<dbReference type="EnsemblMetazoa" id="FBtr0308348">
    <property type="protein sequence ID" value="FBpp0300667"/>
    <property type="gene ID" value="FBgn0010014"/>
</dbReference>
<dbReference type="GeneID" id="44317"/>
<dbReference type="KEGG" id="dme:Dmel_CG4209"/>
<dbReference type="AGR" id="FB:FBgn0010014"/>
<dbReference type="CTD" id="44317"/>
<dbReference type="FlyBase" id="FBgn0010014">
    <property type="gene designation" value="CanB"/>
</dbReference>
<dbReference type="VEuPathDB" id="VectorBase:FBgn0010014"/>
<dbReference type="eggNOG" id="KOG0034">
    <property type="taxonomic scope" value="Eukaryota"/>
</dbReference>
<dbReference type="GeneTree" id="ENSGT00940000156530"/>
<dbReference type="HOGENOM" id="CLU_061288_10_1_1"/>
<dbReference type="InParanoid" id="P48451"/>
<dbReference type="OMA" id="WRKSANT"/>
<dbReference type="OrthoDB" id="191686at2759"/>
<dbReference type="PhylomeDB" id="P48451"/>
<dbReference type="SignaLink" id="P48451"/>
<dbReference type="BioGRID-ORCS" id="44317">
    <property type="hits" value="0 hits in 3 CRISPR screens"/>
</dbReference>
<dbReference type="CD-CODE" id="2838EF58">
    <property type="entry name" value="Centrosome"/>
</dbReference>
<dbReference type="GenomeRNAi" id="44317"/>
<dbReference type="PRO" id="PR:P48451"/>
<dbReference type="Proteomes" id="UP000000803">
    <property type="component" value="Chromosome X"/>
</dbReference>
<dbReference type="Bgee" id="FBgn0010014">
    <property type="expression patterns" value="Expressed in adult gamma Kenyon cell in brain and 157 other cell types or tissues"/>
</dbReference>
<dbReference type="ExpressionAtlas" id="P48451">
    <property type="expression patterns" value="baseline and differential"/>
</dbReference>
<dbReference type="GO" id="GO:0005955">
    <property type="term" value="C:calcineurin complex"/>
    <property type="evidence" value="ECO:0000250"/>
    <property type="project" value="FlyBase"/>
</dbReference>
<dbReference type="GO" id="GO:0008021">
    <property type="term" value="C:synaptic vesicle"/>
    <property type="evidence" value="ECO:0000303"/>
    <property type="project" value="FlyBase"/>
</dbReference>
<dbReference type="GO" id="GO:0005509">
    <property type="term" value="F:calcium ion binding"/>
    <property type="evidence" value="ECO:0000250"/>
    <property type="project" value="FlyBase"/>
</dbReference>
<dbReference type="GO" id="GO:0008597">
    <property type="term" value="F:calcium-dependent protein serine/threonine phosphatase regulator activity"/>
    <property type="evidence" value="ECO:0000250"/>
    <property type="project" value="FlyBase"/>
</dbReference>
<dbReference type="GO" id="GO:0005516">
    <property type="term" value="F:calmodulin binding"/>
    <property type="evidence" value="ECO:0000250"/>
    <property type="project" value="FlyBase"/>
</dbReference>
<dbReference type="GO" id="GO:0019902">
    <property type="term" value="F:phosphatase binding"/>
    <property type="evidence" value="ECO:0000318"/>
    <property type="project" value="GO_Central"/>
</dbReference>
<dbReference type="GO" id="GO:0097720">
    <property type="term" value="P:calcineurin-mediated signaling"/>
    <property type="evidence" value="ECO:0000318"/>
    <property type="project" value="GO_Central"/>
</dbReference>
<dbReference type="GO" id="GO:0007269">
    <property type="term" value="P:neurotransmitter secretion"/>
    <property type="evidence" value="ECO:0000303"/>
    <property type="project" value="FlyBase"/>
</dbReference>
<dbReference type="GO" id="GO:0030431">
    <property type="term" value="P:sleep"/>
    <property type="evidence" value="ECO:0000314"/>
    <property type="project" value="FlyBase"/>
</dbReference>
<dbReference type="GO" id="GO:0016192">
    <property type="term" value="P:vesicle-mediated transport"/>
    <property type="evidence" value="ECO:0000303"/>
    <property type="project" value="FlyBase"/>
</dbReference>
<dbReference type="CDD" id="cd00051">
    <property type="entry name" value="EFh"/>
    <property type="match status" value="1"/>
</dbReference>
<dbReference type="FunFam" id="1.10.238.10:FF:000047">
    <property type="entry name" value="Calcineurin subunit B type 1"/>
    <property type="match status" value="1"/>
</dbReference>
<dbReference type="Gene3D" id="1.10.238.10">
    <property type="entry name" value="EF-hand"/>
    <property type="match status" value="1"/>
</dbReference>
<dbReference type="InterPro" id="IPR011992">
    <property type="entry name" value="EF-hand-dom_pair"/>
</dbReference>
<dbReference type="InterPro" id="IPR018247">
    <property type="entry name" value="EF_Hand_1_Ca_BS"/>
</dbReference>
<dbReference type="InterPro" id="IPR002048">
    <property type="entry name" value="EF_hand_dom"/>
</dbReference>
<dbReference type="PANTHER" id="PTHR45942">
    <property type="entry name" value="PROTEIN PHOSPATASE 3 REGULATORY SUBUNIT B ALPHA ISOFORM TYPE 1"/>
    <property type="match status" value="1"/>
</dbReference>
<dbReference type="Pfam" id="PF13499">
    <property type="entry name" value="EF-hand_7"/>
    <property type="match status" value="2"/>
</dbReference>
<dbReference type="SMART" id="SM00054">
    <property type="entry name" value="EFh"/>
    <property type="match status" value="4"/>
</dbReference>
<dbReference type="SUPFAM" id="SSF47473">
    <property type="entry name" value="EF-hand"/>
    <property type="match status" value="1"/>
</dbReference>
<dbReference type="PROSITE" id="PS00018">
    <property type="entry name" value="EF_HAND_1"/>
    <property type="match status" value="4"/>
</dbReference>
<dbReference type="PROSITE" id="PS50222">
    <property type="entry name" value="EF_HAND_2"/>
    <property type="match status" value="4"/>
</dbReference>
<feature type="chain" id="PRO_0000073488" description="Calcineurin subunit B type 1">
    <location>
        <begin position="1"/>
        <end position="170"/>
    </location>
</feature>
<feature type="domain" description="EF-hand 1" evidence="2">
    <location>
        <begin position="18"/>
        <end position="46"/>
    </location>
</feature>
<feature type="domain" description="EF-hand 2" evidence="2">
    <location>
        <begin position="50"/>
        <end position="85"/>
    </location>
</feature>
<feature type="domain" description="EF-hand 3" evidence="2">
    <location>
        <begin position="87"/>
        <end position="122"/>
    </location>
</feature>
<feature type="domain" description="EF-hand 4" evidence="2">
    <location>
        <begin position="128"/>
        <end position="163"/>
    </location>
</feature>
<feature type="binding site" evidence="2">
    <location>
        <position position="31"/>
    </location>
    <ligand>
        <name>Ca(2+)</name>
        <dbReference type="ChEBI" id="CHEBI:29108"/>
        <label>1</label>
    </ligand>
</feature>
<feature type="binding site" evidence="2">
    <location>
        <position position="33"/>
    </location>
    <ligand>
        <name>Ca(2+)</name>
        <dbReference type="ChEBI" id="CHEBI:29108"/>
        <label>1</label>
    </ligand>
</feature>
<feature type="binding site" evidence="2">
    <location>
        <position position="35"/>
    </location>
    <ligand>
        <name>Ca(2+)</name>
        <dbReference type="ChEBI" id="CHEBI:29108"/>
        <label>1</label>
    </ligand>
</feature>
<feature type="binding site" evidence="2">
    <location>
        <position position="42"/>
    </location>
    <ligand>
        <name>Ca(2+)</name>
        <dbReference type="ChEBI" id="CHEBI:29108"/>
        <label>1</label>
    </ligand>
</feature>
<feature type="binding site" evidence="2">
    <location>
        <position position="63"/>
    </location>
    <ligand>
        <name>Ca(2+)</name>
        <dbReference type="ChEBI" id="CHEBI:29108"/>
        <label>2</label>
    </ligand>
</feature>
<feature type="binding site" evidence="2">
    <location>
        <position position="65"/>
    </location>
    <ligand>
        <name>Ca(2+)</name>
        <dbReference type="ChEBI" id="CHEBI:29108"/>
        <label>2</label>
    </ligand>
</feature>
<feature type="binding site" evidence="2">
    <location>
        <position position="67"/>
    </location>
    <ligand>
        <name>Ca(2+)</name>
        <dbReference type="ChEBI" id="CHEBI:29108"/>
        <label>2</label>
    </ligand>
</feature>
<feature type="binding site" evidence="2">
    <location>
        <position position="69"/>
    </location>
    <ligand>
        <name>Ca(2+)</name>
        <dbReference type="ChEBI" id="CHEBI:29108"/>
        <label>2</label>
    </ligand>
</feature>
<feature type="binding site" evidence="2">
    <location>
        <position position="74"/>
    </location>
    <ligand>
        <name>Ca(2+)</name>
        <dbReference type="ChEBI" id="CHEBI:29108"/>
        <label>2</label>
    </ligand>
</feature>
<feature type="binding site" evidence="2">
    <location>
        <position position="100"/>
    </location>
    <ligand>
        <name>Ca(2+)</name>
        <dbReference type="ChEBI" id="CHEBI:29108"/>
        <label>3</label>
    </ligand>
</feature>
<feature type="binding site" evidence="2">
    <location>
        <position position="102"/>
    </location>
    <ligand>
        <name>Ca(2+)</name>
        <dbReference type="ChEBI" id="CHEBI:29108"/>
        <label>3</label>
    </ligand>
</feature>
<feature type="binding site" evidence="2">
    <location>
        <position position="104"/>
    </location>
    <ligand>
        <name>Ca(2+)</name>
        <dbReference type="ChEBI" id="CHEBI:29108"/>
        <label>3</label>
    </ligand>
</feature>
<feature type="binding site" evidence="2">
    <location>
        <position position="106"/>
    </location>
    <ligand>
        <name>Ca(2+)</name>
        <dbReference type="ChEBI" id="CHEBI:29108"/>
        <label>3</label>
    </ligand>
</feature>
<feature type="binding site" evidence="2">
    <location>
        <position position="111"/>
    </location>
    <ligand>
        <name>Ca(2+)</name>
        <dbReference type="ChEBI" id="CHEBI:29108"/>
        <label>3</label>
    </ligand>
</feature>
<feature type="binding site" evidence="2">
    <location>
        <position position="141"/>
    </location>
    <ligand>
        <name>Ca(2+)</name>
        <dbReference type="ChEBI" id="CHEBI:29108"/>
        <label>4</label>
    </ligand>
</feature>
<feature type="binding site" evidence="2">
    <location>
        <position position="143"/>
    </location>
    <ligand>
        <name>Ca(2+)</name>
        <dbReference type="ChEBI" id="CHEBI:29108"/>
        <label>4</label>
    </ligand>
</feature>
<feature type="binding site" evidence="2">
    <location>
        <position position="145"/>
    </location>
    <ligand>
        <name>Ca(2+)</name>
        <dbReference type="ChEBI" id="CHEBI:29108"/>
        <label>4</label>
    </ligand>
</feature>
<feature type="binding site" evidence="2">
    <location>
        <position position="147"/>
    </location>
    <ligand>
        <name>Ca(2+)</name>
        <dbReference type="ChEBI" id="CHEBI:29108"/>
        <label>4</label>
    </ligand>
</feature>
<feature type="binding site" evidence="2">
    <location>
        <position position="152"/>
    </location>
    <ligand>
        <name>Ca(2+)</name>
        <dbReference type="ChEBI" id="CHEBI:29108"/>
        <label>4</label>
    </ligand>
</feature>
<proteinExistence type="evidence at transcript level"/>
<gene>
    <name type="primary">CanB</name>
    <name type="synonym">CANB1</name>
    <name type="synonym">CNB</name>
    <name type="synonym">CNB1</name>
    <name type="ORF">CG4209</name>
</gene>